<evidence type="ECO:0000250" key="1">
    <source>
        <dbReference type="UniProtKB" id="P56780"/>
    </source>
</evidence>
<evidence type="ECO:0000255" key="2">
    <source>
        <dbReference type="HAMAP-Rule" id="MF_00752"/>
    </source>
</evidence>
<reference key="1">
    <citation type="journal article" date="2006" name="Plant Cell Rep.">
        <title>Complete sequence and organization of the cucumber (Cucumis sativus L. cv. Baekmibaekdadagi) chloroplast genome.</title>
        <authorList>
            <person name="Kim J.-S."/>
            <person name="Jung J.D."/>
            <person name="Lee J.-A."/>
            <person name="Park H.-W."/>
            <person name="Oh K.-H."/>
            <person name="Jeong W.J."/>
            <person name="Choi D.-W."/>
            <person name="Liu J.R."/>
            <person name="Cho K.Y."/>
        </authorList>
    </citation>
    <scope>NUCLEOTIDE SEQUENCE [LARGE SCALE GENOMIC DNA]</scope>
    <source>
        <strain>cv. Baekmibaekdadagi</strain>
    </source>
</reference>
<reference key="2">
    <citation type="journal article" date="2007" name="Cell. Mol. Biol. Lett.">
        <title>The complete structure of the cucumber (Cucumis sativus L.) chloroplast genome: its composition and comparative analysis.</title>
        <authorList>
            <person name="Plader W.W."/>
            <person name="Yukawa Y."/>
            <person name="Sugiura M."/>
            <person name="Malepszy S."/>
        </authorList>
    </citation>
    <scope>NUCLEOTIDE SEQUENCE [LARGE SCALE GENOMIC DNA]</scope>
    <source>
        <strain>cv. Borszczagowski</strain>
    </source>
</reference>
<reference key="3">
    <citation type="journal article" date="2007" name="Genome">
        <title>Sequencing cucumber (Cucumis sativus L.) chloroplast genomes identifies differences between chilling-tolerant and -susceptible cucumber lines.</title>
        <authorList>
            <person name="Chung S.-M."/>
            <person name="Gordon V.S."/>
            <person name="Staub J.E."/>
        </authorList>
    </citation>
    <scope>NUCLEOTIDE SEQUENCE [LARGE SCALE GENOMIC DNA]</scope>
    <source>
        <strain>cv. Chipper</strain>
        <strain>cv. Gy14</strain>
    </source>
</reference>
<gene>
    <name evidence="2" type="primary">psbH</name>
    <name type="ordered locus">CsCp071</name>
</gene>
<keyword id="KW-0150">Chloroplast</keyword>
<keyword id="KW-0472">Membrane</keyword>
<keyword id="KW-0597">Phosphoprotein</keyword>
<keyword id="KW-0602">Photosynthesis</keyword>
<keyword id="KW-0604">Photosystem II</keyword>
<keyword id="KW-0934">Plastid</keyword>
<keyword id="KW-0793">Thylakoid</keyword>
<keyword id="KW-0812">Transmembrane</keyword>
<keyword id="KW-1133">Transmembrane helix</keyword>
<dbReference type="EMBL" id="DQ119058">
    <property type="protein sequence ID" value="AAZ94679.1"/>
    <property type="molecule type" value="Genomic_DNA"/>
</dbReference>
<dbReference type="EMBL" id="AJ970307">
    <property type="protein sequence ID" value="CAJ00788.1"/>
    <property type="molecule type" value="Genomic_DNA"/>
</dbReference>
<dbReference type="EMBL" id="DQ865975">
    <property type="protein sequence ID" value="ABI97445.1"/>
    <property type="molecule type" value="Genomic_DNA"/>
</dbReference>
<dbReference type="EMBL" id="DQ865976">
    <property type="protein sequence ID" value="ABI98774.1"/>
    <property type="molecule type" value="Genomic_DNA"/>
</dbReference>
<dbReference type="RefSeq" id="YP_247629.1">
    <property type="nucleotide sequence ID" value="NC_007144.1"/>
</dbReference>
<dbReference type="SMR" id="Q4VZI9"/>
<dbReference type="GeneID" id="3429281"/>
<dbReference type="KEGG" id="csv:3429281"/>
<dbReference type="OrthoDB" id="1855002at2759"/>
<dbReference type="GO" id="GO:0009535">
    <property type="term" value="C:chloroplast thylakoid membrane"/>
    <property type="evidence" value="ECO:0007669"/>
    <property type="project" value="UniProtKB-SubCell"/>
</dbReference>
<dbReference type="GO" id="GO:0009523">
    <property type="term" value="C:photosystem II"/>
    <property type="evidence" value="ECO:0007669"/>
    <property type="project" value="UniProtKB-KW"/>
</dbReference>
<dbReference type="GO" id="GO:0042301">
    <property type="term" value="F:phosphate ion binding"/>
    <property type="evidence" value="ECO:0007669"/>
    <property type="project" value="InterPro"/>
</dbReference>
<dbReference type="GO" id="GO:0015979">
    <property type="term" value="P:photosynthesis"/>
    <property type="evidence" value="ECO:0007669"/>
    <property type="project" value="UniProtKB-UniRule"/>
</dbReference>
<dbReference type="GO" id="GO:0050821">
    <property type="term" value="P:protein stabilization"/>
    <property type="evidence" value="ECO:0007669"/>
    <property type="project" value="InterPro"/>
</dbReference>
<dbReference type="FunFam" id="1.20.5.880:FF:000001">
    <property type="entry name" value="Photosystem II reaction center protein H"/>
    <property type="match status" value="1"/>
</dbReference>
<dbReference type="Gene3D" id="1.20.5.880">
    <property type="entry name" value="Photosystem II reaction center protein H"/>
    <property type="match status" value="1"/>
</dbReference>
<dbReference type="HAMAP" id="MF_00752">
    <property type="entry name" value="PSII_PsbH"/>
    <property type="match status" value="1"/>
</dbReference>
<dbReference type="InterPro" id="IPR001056">
    <property type="entry name" value="PSII_PsbH"/>
</dbReference>
<dbReference type="InterPro" id="IPR036863">
    <property type="entry name" value="PSII_PsbH_sf"/>
</dbReference>
<dbReference type="NCBIfam" id="NF002728">
    <property type="entry name" value="PRK02624.1"/>
    <property type="match status" value="1"/>
</dbReference>
<dbReference type="PANTHER" id="PTHR34469">
    <property type="entry name" value="PHOTOSYSTEM II REACTION CENTER PROTEIN H"/>
    <property type="match status" value="1"/>
</dbReference>
<dbReference type="PANTHER" id="PTHR34469:SF4">
    <property type="entry name" value="PHOTOSYSTEM II REACTION CENTER PROTEIN H"/>
    <property type="match status" value="1"/>
</dbReference>
<dbReference type="Pfam" id="PF00737">
    <property type="entry name" value="PsbH"/>
    <property type="match status" value="1"/>
</dbReference>
<dbReference type="SUPFAM" id="SSF161025">
    <property type="entry name" value="Photosystem II 10 kDa phosphoprotein PsbH"/>
    <property type="match status" value="1"/>
</dbReference>
<protein>
    <recommendedName>
        <fullName evidence="2">Photosystem II reaction center protein H</fullName>
        <shortName evidence="2">PSII-H</shortName>
    </recommendedName>
    <alternativeName>
        <fullName evidence="2">Photosystem II 10 kDa phosphoprotein</fullName>
    </alternativeName>
</protein>
<geneLocation type="chloroplast"/>
<organism>
    <name type="scientific">Cucumis sativus</name>
    <name type="common">Cucumber</name>
    <dbReference type="NCBI Taxonomy" id="3659"/>
    <lineage>
        <taxon>Eukaryota</taxon>
        <taxon>Viridiplantae</taxon>
        <taxon>Streptophyta</taxon>
        <taxon>Embryophyta</taxon>
        <taxon>Tracheophyta</taxon>
        <taxon>Spermatophyta</taxon>
        <taxon>Magnoliopsida</taxon>
        <taxon>eudicotyledons</taxon>
        <taxon>Gunneridae</taxon>
        <taxon>Pentapetalae</taxon>
        <taxon>rosids</taxon>
        <taxon>fabids</taxon>
        <taxon>Cucurbitales</taxon>
        <taxon>Cucurbitaceae</taxon>
        <taxon>Benincaseae</taxon>
        <taxon>Cucumis</taxon>
    </lineage>
</organism>
<proteinExistence type="inferred from homology"/>
<accession>Q4VZI9</accession>
<accession>A5J1W3</accession>
<sequence length="73" mass="7762">MATQTVDDSSKSGPRRTVVGDLLKPLNSEYGKVAPGWGTTPLMGVAMSLFAIFLCIILEIYNSSILLDGISSN</sequence>
<comment type="function">
    <text evidence="2">One of the components of the core complex of photosystem II (PSII), required for its stability and/or assembly. PSII is a light-driven water:plastoquinone oxidoreductase that uses light energy to abstract electrons from H(2)O, generating O(2) and a proton gradient subsequently used for ATP formation. It consists of a core antenna complex that captures photons, and an electron transfer chain that converts photonic excitation into a charge separation.</text>
</comment>
<comment type="subunit">
    <text evidence="2">PSII is composed of 1 copy each of membrane proteins PsbA, PsbB, PsbC, PsbD, PsbE, PsbF, PsbH, PsbI, PsbJ, PsbK, PsbL, PsbM, PsbT, PsbX, PsbY, PsbZ, Psb30/Ycf12, at least 3 peripheral proteins of the oxygen-evolving complex and a large number of cofactors. It forms dimeric complexes.</text>
</comment>
<comment type="subcellular location">
    <subcellularLocation>
        <location evidence="2">Plastid</location>
        <location evidence="2">Chloroplast thylakoid membrane</location>
        <topology evidence="2">Single-pass membrane protein</topology>
    </subcellularLocation>
</comment>
<comment type="PTM">
    <text evidence="2">Phosphorylation is a light-dependent reaction catalyzed by a membrane-bound kinase; phosphorylation occurs on Thr residue(s) in the N-terminus of the protein.</text>
</comment>
<comment type="similarity">
    <text evidence="2">Belongs to the PsbH family.</text>
</comment>
<feature type="initiator methionine" description="Removed" evidence="1">
    <location>
        <position position="1"/>
    </location>
</feature>
<feature type="chain" id="PRO_0000275750" description="Photosystem II reaction center protein H">
    <location>
        <begin position="2"/>
        <end position="73"/>
    </location>
</feature>
<feature type="transmembrane region" description="Helical" evidence="2">
    <location>
        <begin position="41"/>
        <end position="61"/>
    </location>
</feature>
<feature type="modified residue" description="Phosphothreonine" evidence="2">
    <location>
        <position position="3"/>
    </location>
</feature>
<feature type="modified residue" description="Phosphothreonine" evidence="2">
    <location>
        <position position="5"/>
    </location>
</feature>
<name>PSBH_CUCSA</name>